<gene>
    <name evidence="1" type="primary">rpsJ</name>
    <name type="ordered locus">SPy_0047</name>
    <name type="ordered locus">M5005_Spy0043</name>
</gene>
<keyword id="KW-1185">Reference proteome</keyword>
<keyword id="KW-0687">Ribonucleoprotein</keyword>
<keyword id="KW-0689">Ribosomal protein</keyword>
<protein>
    <recommendedName>
        <fullName evidence="1">Small ribosomal subunit protein uS10</fullName>
    </recommendedName>
    <alternativeName>
        <fullName evidence="2">30S ribosomal protein S10</fullName>
    </alternativeName>
</protein>
<dbReference type="EMBL" id="AE004092">
    <property type="protein sequence ID" value="AAK33181.1"/>
    <property type="molecule type" value="Genomic_DNA"/>
</dbReference>
<dbReference type="EMBL" id="CP000017">
    <property type="protein sequence ID" value="AAZ50662.1"/>
    <property type="molecule type" value="Genomic_DNA"/>
</dbReference>
<dbReference type="RefSeq" id="NP_268459.1">
    <property type="nucleotide sequence ID" value="NC_002737.2"/>
</dbReference>
<dbReference type="SMR" id="P66341"/>
<dbReference type="PaxDb" id="1314-HKU360_00076"/>
<dbReference type="KEGG" id="spy:SPy_0047"/>
<dbReference type="KEGG" id="spz:M5005_Spy0043"/>
<dbReference type="PATRIC" id="fig|160490.10.peg.43"/>
<dbReference type="HOGENOM" id="CLU_122625_1_3_9"/>
<dbReference type="OMA" id="VDIEIKM"/>
<dbReference type="PRO" id="PR:P66341"/>
<dbReference type="Proteomes" id="UP000000750">
    <property type="component" value="Chromosome"/>
</dbReference>
<dbReference type="GO" id="GO:1990904">
    <property type="term" value="C:ribonucleoprotein complex"/>
    <property type="evidence" value="ECO:0007669"/>
    <property type="project" value="UniProtKB-KW"/>
</dbReference>
<dbReference type="GO" id="GO:0005840">
    <property type="term" value="C:ribosome"/>
    <property type="evidence" value="ECO:0007669"/>
    <property type="project" value="UniProtKB-KW"/>
</dbReference>
<dbReference type="GO" id="GO:0003735">
    <property type="term" value="F:structural constituent of ribosome"/>
    <property type="evidence" value="ECO:0007669"/>
    <property type="project" value="InterPro"/>
</dbReference>
<dbReference type="GO" id="GO:0000049">
    <property type="term" value="F:tRNA binding"/>
    <property type="evidence" value="ECO:0007669"/>
    <property type="project" value="UniProtKB-UniRule"/>
</dbReference>
<dbReference type="GO" id="GO:0006412">
    <property type="term" value="P:translation"/>
    <property type="evidence" value="ECO:0007669"/>
    <property type="project" value="UniProtKB-UniRule"/>
</dbReference>
<dbReference type="FunFam" id="3.30.70.600:FF:000001">
    <property type="entry name" value="30S ribosomal protein S10"/>
    <property type="match status" value="1"/>
</dbReference>
<dbReference type="Gene3D" id="3.30.70.600">
    <property type="entry name" value="Ribosomal protein S10 domain"/>
    <property type="match status" value="1"/>
</dbReference>
<dbReference type="HAMAP" id="MF_00508">
    <property type="entry name" value="Ribosomal_uS10"/>
    <property type="match status" value="1"/>
</dbReference>
<dbReference type="InterPro" id="IPR001848">
    <property type="entry name" value="Ribosomal_uS10"/>
</dbReference>
<dbReference type="InterPro" id="IPR018268">
    <property type="entry name" value="Ribosomal_uS10_CS"/>
</dbReference>
<dbReference type="InterPro" id="IPR027486">
    <property type="entry name" value="Ribosomal_uS10_dom"/>
</dbReference>
<dbReference type="InterPro" id="IPR036838">
    <property type="entry name" value="Ribosomal_uS10_dom_sf"/>
</dbReference>
<dbReference type="NCBIfam" id="NF001861">
    <property type="entry name" value="PRK00596.1"/>
    <property type="match status" value="1"/>
</dbReference>
<dbReference type="NCBIfam" id="TIGR01049">
    <property type="entry name" value="rpsJ_bact"/>
    <property type="match status" value="1"/>
</dbReference>
<dbReference type="PANTHER" id="PTHR11700">
    <property type="entry name" value="30S RIBOSOMAL PROTEIN S10 FAMILY MEMBER"/>
    <property type="match status" value="1"/>
</dbReference>
<dbReference type="Pfam" id="PF00338">
    <property type="entry name" value="Ribosomal_S10"/>
    <property type="match status" value="1"/>
</dbReference>
<dbReference type="PRINTS" id="PR00971">
    <property type="entry name" value="RIBOSOMALS10"/>
</dbReference>
<dbReference type="SMART" id="SM01403">
    <property type="entry name" value="Ribosomal_S10"/>
    <property type="match status" value="1"/>
</dbReference>
<dbReference type="SUPFAM" id="SSF54999">
    <property type="entry name" value="Ribosomal protein S10"/>
    <property type="match status" value="1"/>
</dbReference>
<dbReference type="PROSITE" id="PS00361">
    <property type="entry name" value="RIBOSOMAL_S10"/>
    <property type="match status" value="1"/>
</dbReference>
<evidence type="ECO:0000255" key="1">
    <source>
        <dbReference type="HAMAP-Rule" id="MF_00508"/>
    </source>
</evidence>
<evidence type="ECO:0000305" key="2"/>
<accession>P66341</accession>
<accession>Q491Q6</accession>
<accession>Q9A1X5</accession>
<proteinExistence type="inferred from homology"/>
<organism>
    <name type="scientific">Streptococcus pyogenes serotype M1</name>
    <dbReference type="NCBI Taxonomy" id="301447"/>
    <lineage>
        <taxon>Bacteria</taxon>
        <taxon>Bacillati</taxon>
        <taxon>Bacillota</taxon>
        <taxon>Bacilli</taxon>
        <taxon>Lactobacillales</taxon>
        <taxon>Streptococcaceae</taxon>
        <taxon>Streptococcus</taxon>
    </lineage>
</organism>
<name>RS10_STRP1</name>
<reference key="1">
    <citation type="journal article" date="2001" name="Proc. Natl. Acad. Sci. U.S.A.">
        <title>Complete genome sequence of an M1 strain of Streptococcus pyogenes.</title>
        <authorList>
            <person name="Ferretti J.J."/>
            <person name="McShan W.M."/>
            <person name="Ajdic D.J."/>
            <person name="Savic D.J."/>
            <person name="Savic G."/>
            <person name="Lyon K."/>
            <person name="Primeaux C."/>
            <person name="Sezate S."/>
            <person name="Suvorov A.N."/>
            <person name="Kenton S."/>
            <person name="Lai H.S."/>
            <person name="Lin S.P."/>
            <person name="Qian Y."/>
            <person name="Jia H.G."/>
            <person name="Najar F.Z."/>
            <person name="Ren Q."/>
            <person name="Zhu H."/>
            <person name="Song L."/>
            <person name="White J."/>
            <person name="Yuan X."/>
            <person name="Clifton S.W."/>
            <person name="Roe B.A."/>
            <person name="McLaughlin R.E."/>
        </authorList>
    </citation>
    <scope>NUCLEOTIDE SEQUENCE [LARGE SCALE GENOMIC DNA]</scope>
    <source>
        <strain>ATCC 700294 / SF370 / Serotype M1</strain>
    </source>
</reference>
<reference key="2">
    <citation type="journal article" date="2005" name="J. Infect. Dis.">
        <title>Evolutionary origin and emergence of a highly successful clone of serotype M1 group A Streptococcus involved multiple horizontal gene transfer events.</title>
        <authorList>
            <person name="Sumby P."/>
            <person name="Porcella S.F."/>
            <person name="Madrigal A.G."/>
            <person name="Barbian K.D."/>
            <person name="Virtaneva K."/>
            <person name="Ricklefs S.M."/>
            <person name="Sturdevant D.E."/>
            <person name="Graham M.R."/>
            <person name="Vuopio-Varkila J."/>
            <person name="Hoe N.P."/>
            <person name="Musser J.M."/>
        </authorList>
    </citation>
    <scope>NUCLEOTIDE SEQUENCE [LARGE SCALE GENOMIC DNA]</scope>
    <source>
        <strain>ATCC BAA-947 / MGAS5005 / Serotype M1</strain>
    </source>
</reference>
<feature type="chain" id="PRO_0000146609" description="Small ribosomal subunit protein uS10">
    <location>
        <begin position="1"/>
        <end position="102"/>
    </location>
</feature>
<comment type="function">
    <text evidence="1">Involved in the binding of tRNA to the ribosomes.</text>
</comment>
<comment type="subunit">
    <text evidence="1">Part of the 30S ribosomal subunit.</text>
</comment>
<comment type="similarity">
    <text evidence="1">Belongs to the universal ribosomal protein uS10 family.</text>
</comment>
<sequence length="102" mass="11614">MANKKIRIRLKAYEHRTLDTAAEKIVETATRTGATVAGPVPLPTERSLYTIIRATHKYKDSREQFEMRTHKRLVDIINPTQKTVDALMKLDLPSGVNVEIKL</sequence>